<protein>
    <recommendedName>
        <fullName evidence="1">Methylenetetrahydrofolate--tRNA-(uracil-5-)-methyltransferase TrmFO</fullName>
        <ecNumber evidence="1">2.1.1.74</ecNumber>
    </recommendedName>
    <alternativeName>
        <fullName evidence="1">Folate-dependent tRNA (uracil-5-)-methyltransferase</fullName>
    </alternativeName>
    <alternativeName>
        <fullName evidence="1">Folate-dependent tRNA(M-5-U54)-methyltransferase</fullName>
    </alternativeName>
</protein>
<gene>
    <name evidence="1" type="primary">trmFO</name>
    <name type="ordered locus">BBta_4399</name>
</gene>
<dbReference type="EC" id="2.1.1.74" evidence="1"/>
<dbReference type="EMBL" id="CP000494">
    <property type="protein sequence ID" value="ABQ36438.1"/>
    <property type="molecule type" value="Genomic_DNA"/>
</dbReference>
<dbReference type="SMR" id="A5EJU4"/>
<dbReference type="STRING" id="288000.BBta_4399"/>
<dbReference type="KEGG" id="bbt:BBta_4399"/>
<dbReference type="eggNOG" id="COG1206">
    <property type="taxonomic scope" value="Bacteria"/>
</dbReference>
<dbReference type="HOGENOM" id="CLU_033057_1_0_5"/>
<dbReference type="Proteomes" id="UP000000246">
    <property type="component" value="Chromosome"/>
</dbReference>
<dbReference type="GO" id="GO:0005829">
    <property type="term" value="C:cytosol"/>
    <property type="evidence" value="ECO:0007669"/>
    <property type="project" value="TreeGrafter"/>
</dbReference>
<dbReference type="GO" id="GO:0050660">
    <property type="term" value="F:flavin adenine dinucleotide binding"/>
    <property type="evidence" value="ECO:0007669"/>
    <property type="project" value="UniProtKB-UniRule"/>
</dbReference>
<dbReference type="GO" id="GO:0047151">
    <property type="term" value="F:tRNA (uracil(54)-C5)-methyltransferase activity, 5,10-methylenetetrahydrofolate-dependent"/>
    <property type="evidence" value="ECO:0007669"/>
    <property type="project" value="UniProtKB-UniRule"/>
</dbReference>
<dbReference type="GO" id="GO:0030488">
    <property type="term" value="P:tRNA methylation"/>
    <property type="evidence" value="ECO:0007669"/>
    <property type="project" value="TreeGrafter"/>
</dbReference>
<dbReference type="GO" id="GO:0002098">
    <property type="term" value="P:tRNA wobble uridine modification"/>
    <property type="evidence" value="ECO:0007669"/>
    <property type="project" value="TreeGrafter"/>
</dbReference>
<dbReference type="Gene3D" id="3.50.50.60">
    <property type="entry name" value="FAD/NAD(P)-binding domain"/>
    <property type="match status" value="2"/>
</dbReference>
<dbReference type="HAMAP" id="MF_01037">
    <property type="entry name" value="TrmFO"/>
    <property type="match status" value="1"/>
</dbReference>
<dbReference type="InterPro" id="IPR036188">
    <property type="entry name" value="FAD/NAD-bd_sf"/>
</dbReference>
<dbReference type="InterPro" id="IPR002218">
    <property type="entry name" value="MnmG-rel"/>
</dbReference>
<dbReference type="InterPro" id="IPR020595">
    <property type="entry name" value="MnmG-rel_CS"/>
</dbReference>
<dbReference type="InterPro" id="IPR040131">
    <property type="entry name" value="MnmG_N"/>
</dbReference>
<dbReference type="InterPro" id="IPR004417">
    <property type="entry name" value="TrmFO"/>
</dbReference>
<dbReference type="NCBIfam" id="TIGR00137">
    <property type="entry name" value="gid_trmFO"/>
    <property type="match status" value="1"/>
</dbReference>
<dbReference type="NCBIfam" id="NF003739">
    <property type="entry name" value="PRK05335.1"/>
    <property type="match status" value="1"/>
</dbReference>
<dbReference type="PANTHER" id="PTHR11806">
    <property type="entry name" value="GLUCOSE INHIBITED DIVISION PROTEIN A"/>
    <property type="match status" value="1"/>
</dbReference>
<dbReference type="PANTHER" id="PTHR11806:SF2">
    <property type="entry name" value="METHYLENETETRAHYDROFOLATE--TRNA-(URACIL-5-)-METHYLTRANSFERASE TRMFO"/>
    <property type="match status" value="1"/>
</dbReference>
<dbReference type="Pfam" id="PF01134">
    <property type="entry name" value="GIDA"/>
    <property type="match status" value="1"/>
</dbReference>
<dbReference type="SUPFAM" id="SSF51905">
    <property type="entry name" value="FAD/NAD(P)-binding domain"/>
    <property type="match status" value="1"/>
</dbReference>
<dbReference type="PROSITE" id="PS01281">
    <property type="entry name" value="GIDA_2"/>
    <property type="match status" value="1"/>
</dbReference>
<name>TRMFO_BRASB</name>
<evidence type="ECO:0000255" key="1">
    <source>
        <dbReference type="HAMAP-Rule" id="MF_01037"/>
    </source>
</evidence>
<proteinExistence type="inferred from homology"/>
<organism>
    <name type="scientific">Bradyrhizobium sp. (strain BTAi1 / ATCC BAA-1182)</name>
    <dbReference type="NCBI Taxonomy" id="288000"/>
    <lineage>
        <taxon>Bacteria</taxon>
        <taxon>Pseudomonadati</taxon>
        <taxon>Pseudomonadota</taxon>
        <taxon>Alphaproteobacteria</taxon>
        <taxon>Hyphomicrobiales</taxon>
        <taxon>Nitrobacteraceae</taxon>
        <taxon>Bradyrhizobium</taxon>
    </lineage>
</organism>
<accession>A5EJU4</accession>
<reference key="1">
    <citation type="journal article" date="2007" name="Science">
        <title>Legumes symbioses: absence of nod genes in photosynthetic bradyrhizobia.</title>
        <authorList>
            <person name="Giraud E."/>
            <person name="Moulin L."/>
            <person name="Vallenet D."/>
            <person name="Barbe V."/>
            <person name="Cytryn E."/>
            <person name="Avarre J.-C."/>
            <person name="Jaubert M."/>
            <person name="Simon D."/>
            <person name="Cartieaux F."/>
            <person name="Prin Y."/>
            <person name="Bena G."/>
            <person name="Hannibal L."/>
            <person name="Fardoux J."/>
            <person name="Kojadinovic M."/>
            <person name="Vuillet L."/>
            <person name="Lajus A."/>
            <person name="Cruveiller S."/>
            <person name="Rouy Z."/>
            <person name="Mangenot S."/>
            <person name="Segurens B."/>
            <person name="Dossat C."/>
            <person name="Franck W.L."/>
            <person name="Chang W.-S."/>
            <person name="Saunders E."/>
            <person name="Bruce D."/>
            <person name="Richardson P."/>
            <person name="Normand P."/>
            <person name="Dreyfus B."/>
            <person name="Pignol D."/>
            <person name="Stacey G."/>
            <person name="Emerich D."/>
            <person name="Vermeglio A."/>
            <person name="Medigue C."/>
            <person name="Sadowsky M."/>
        </authorList>
    </citation>
    <scope>NUCLEOTIDE SEQUENCE [LARGE SCALE GENOMIC DNA]</scope>
    <source>
        <strain>BTAi1 / ATCC BAA-1182</strain>
    </source>
</reference>
<feature type="chain" id="PRO_0000346325" description="Methylenetetrahydrofolate--tRNA-(uracil-5-)-methyltransferase TrmFO">
    <location>
        <begin position="1"/>
        <end position="465"/>
    </location>
</feature>
<feature type="binding site" evidence="1">
    <location>
        <begin position="3"/>
        <end position="8"/>
    </location>
    <ligand>
        <name>FAD</name>
        <dbReference type="ChEBI" id="CHEBI:57692"/>
    </ligand>
</feature>
<keyword id="KW-0963">Cytoplasm</keyword>
<keyword id="KW-0274">FAD</keyword>
<keyword id="KW-0285">Flavoprotein</keyword>
<keyword id="KW-0489">Methyltransferase</keyword>
<keyword id="KW-0520">NAD</keyword>
<keyword id="KW-0521">NADP</keyword>
<keyword id="KW-1185">Reference proteome</keyword>
<keyword id="KW-0808">Transferase</keyword>
<keyword id="KW-0819">tRNA processing</keyword>
<sequence>MIGAGLAGSEAAWQLAEAGVDVVLHEMRPDRMTEAHRTATPAELVCSNSFRSDDAANNAVGLLHAEMRRLGSLIMRAADANQVPAGGALAVDREGFSAAVATALNGHPRIELRRGEITGLPPSDWDNVIIATGPLTSQPLAEAIRDLTDETALAFFDAIAPIVHRDTIDMSKAWFQSRYDKVGPGGTGADYINCPMTKDQYDTFVAALLAGEKTDFKDWETNTPYFDGCLPIEVMAERGHETLRHGPMKPVGLTNPHNPTVKPHAIVQLRQDNKLGTLYNMVGFQTKLKYGPQQQIFRTIPGLENAEFARLGGLHRNTFLNSPKLLDAQLRLRAQPRLRFAGQMTGCEGYVESASIGLIAGLYAAAEARGTGLSPPPATTALGALLGHITGGHIETIDGATRSFQPMNINFGLFPPLAVAPTRKPDGSRLKGNEKTVAKKQALSARALADLDGWIAEHLRVAAAA</sequence>
<comment type="function">
    <text evidence="1">Catalyzes the folate-dependent formation of 5-methyl-uridine at position 54 (M-5-U54) in all tRNAs.</text>
</comment>
<comment type="catalytic activity">
    <reaction evidence="1">
        <text>uridine(54) in tRNA + (6R)-5,10-methylene-5,6,7,8-tetrahydrofolate + NADH + H(+) = 5-methyluridine(54) in tRNA + (6S)-5,6,7,8-tetrahydrofolate + NAD(+)</text>
        <dbReference type="Rhea" id="RHEA:16873"/>
        <dbReference type="Rhea" id="RHEA-COMP:10167"/>
        <dbReference type="Rhea" id="RHEA-COMP:10193"/>
        <dbReference type="ChEBI" id="CHEBI:15378"/>
        <dbReference type="ChEBI" id="CHEBI:15636"/>
        <dbReference type="ChEBI" id="CHEBI:57453"/>
        <dbReference type="ChEBI" id="CHEBI:57540"/>
        <dbReference type="ChEBI" id="CHEBI:57945"/>
        <dbReference type="ChEBI" id="CHEBI:65315"/>
        <dbReference type="ChEBI" id="CHEBI:74447"/>
        <dbReference type="EC" id="2.1.1.74"/>
    </reaction>
</comment>
<comment type="catalytic activity">
    <reaction evidence="1">
        <text>uridine(54) in tRNA + (6R)-5,10-methylene-5,6,7,8-tetrahydrofolate + NADPH + H(+) = 5-methyluridine(54) in tRNA + (6S)-5,6,7,8-tetrahydrofolate + NADP(+)</text>
        <dbReference type="Rhea" id="RHEA:62372"/>
        <dbReference type="Rhea" id="RHEA-COMP:10167"/>
        <dbReference type="Rhea" id="RHEA-COMP:10193"/>
        <dbReference type="ChEBI" id="CHEBI:15378"/>
        <dbReference type="ChEBI" id="CHEBI:15636"/>
        <dbReference type="ChEBI" id="CHEBI:57453"/>
        <dbReference type="ChEBI" id="CHEBI:57783"/>
        <dbReference type="ChEBI" id="CHEBI:58349"/>
        <dbReference type="ChEBI" id="CHEBI:65315"/>
        <dbReference type="ChEBI" id="CHEBI:74447"/>
        <dbReference type="EC" id="2.1.1.74"/>
    </reaction>
</comment>
<comment type="cofactor">
    <cofactor evidence="1">
        <name>FAD</name>
        <dbReference type="ChEBI" id="CHEBI:57692"/>
    </cofactor>
</comment>
<comment type="subcellular location">
    <subcellularLocation>
        <location evidence="1">Cytoplasm</location>
    </subcellularLocation>
</comment>
<comment type="similarity">
    <text evidence="1">Belongs to the MnmG family. TrmFO subfamily.</text>
</comment>